<name>FUB12_GIBF5</name>
<feature type="chain" id="PRO_0000437330" description="Fusaric acid cluster transcription factor FUB12">
    <location>
        <begin position="1"/>
        <end position="661"/>
    </location>
</feature>
<feature type="DNA-binding region" description="Zn(2)-C6 fungal-type" evidence="1">
    <location>
        <begin position="17"/>
        <end position="48"/>
    </location>
</feature>
<feature type="region of interest" description="Disordered" evidence="2">
    <location>
        <begin position="57"/>
        <end position="131"/>
    </location>
</feature>
<feature type="region of interest" description="Disordered" evidence="2">
    <location>
        <begin position="151"/>
        <end position="185"/>
    </location>
</feature>
<feature type="compositionally biased region" description="Polar residues" evidence="2">
    <location>
        <begin position="73"/>
        <end position="98"/>
    </location>
</feature>
<feature type="compositionally biased region" description="Basic and acidic residues" evidence="2">
    <location>
        <begin position="99"/>
        <end position="109"/>
    </location>
</feature>
<feature type="compositionally biased region" description="Polar residues" evidence="2">
    <location>
        <begin position="110"/>
        <end position="119"/>
    </location>
</feature>
<feature type="compositionally biased region" description="Basic and acidic residues" evidence="2">
    <location>
        <begin position="120"/>
        <end position="129"/>
    </location>
</feature>
<evidence type="ECO:0000255" key="1">
    <source>
        <dbReference type="PROSITE-ProRule" id="PRU00227"/>
    </source>
</evidence>
<evidence type="ECO:0000256" key="2">
    <source>
        <dbReference type="SAM" id="MobiDB-lite"/>
    </source>
</evidence>
<evidence type="ECO:0000269" key="3">
    <source>
    </source>
</evidence>
<evidence type="ECO:0000269" key="4">
    <source>
    </source>
</evidence>
<evidence type="ECO:0000269" key="5">
    <source>
    </source>
</evidence>
<evidence type="ECO:0000269" key="6">
    <source>
    </source>
</evidence>
<evidence type="ECO:0000269" key="7">
    <source>
    </source>
</evidence>
<evidence type="ECO:0000269" key="8">
    <source>
    </source>
</evidence>
<evidence type="ECO:0000269" key="9">
    <source>
    </source>
</evidence>
<evidence type="ECO:0000269" key="10">
    <source>
    </source>
</evidence>
<evidence type="ECO:0000303" key="11">
    <source>
    </source>
</evidence>
<reference key="1">
    <citation type="journal article" date="2013" name="PLoS Pathog.">
        <title>Deciphering the cryptic genome: genome-wide analyses of the rice pathogen Fusarium fujikuroi reveal complex regulation of secondary metabolism and novel metabolites.</title>
        <authorList>
            <person name="Wiemann P."/>
            <person name="Sieber C.M.K."/>
            <person name="von Bargen K.W."/>
            <person name="Studt L."/>
            <person name="Niehaus E.-M."/>
            <person name="Espino J.J."/>
            <person name="Huss K."/>
            <person name="Michielse C.B."/>
            <person name="Albermann S."/>
            <person name="Wagner D."/>
            <person name="Bergner S.V."/>
            <person name="Connolly L.R."/>
            <person name="Fischer A."/>
            <person name="Reuter G."/>
            <person name="Kleigrewe K."/>
            <person name="Bald T."/>
            <person name="Wingfield B.D."/>
            <person name="Ophir R."/>
            <person name="Freeman S."/>
            <person name="Hippler M."/>
            <person name="Smith K.M."/>
            <person name="Brown D.W."/>
            <person name="Proctor R.H."/>
            <person name="Muensterkoetter M."/>
            <person name="Freitag M."/>
            <person name="Humpf H.-U."/>
            <person name="Gueldener U."/>
            <person name="Tudzynski B."/>
        </authorList>
    </citation>
    <scope>NUCLEOTIDE SEQUENCE [LARGE SCALE GENOMIC DNA]</scope>
    <source>
        <strain>CBS 195.34 / IMI 58289 / NRRL A-6831</strain>
    </source>
</reference>
<reference key="2">
    <citation type="journal article" date="2006" name="Planta">
        <title>Fusaric acid induces apoptosis in saffron root-tip cells: roles of caspase-like activity, cytochrome c, and H2O2.</title>
        <authorList>
            <person name="Samadi L."/>
            <person name="Shahsavan Behboodi B."/>
        </authorList>
    </citation>
    <scope>BIOTECHNOLOGY</scope>
</reference>
<reference key="3">
    <citation type="journal article" date="2008" name="J. Appl. Microbiol.">
        <title>Bikaverin and fusaric acid from Fusarium oxysporum show antioomycete activity against Phytophthora infestans.</title>
        <authorList>
            <person name="Son S.W."/>
            <person name="Kim H.Y."/>
            <person name="Choi G.J."/>
            <person name="Lim H.K."/>
            <person name="Jang K.S."/>
            <person name="Lee S.O."/>
            <person name="Lee S."/>
            <person name="Sung N.D."/>
            <person name="Kim J.C."/>
        </authorList>
    </citation>
    <scope>BIOTECHNOLOGY</scope>
</reference>
<reference key="4">
    <citation type="journal article" date="2011" name="Arch. Pharm. Res.">
        <title>Antimycobacterial activity of fusaric acid from a mangrove endophyte and its metal complexes.</title>
        <authorList>
            <person name="Pan J.H."/>
            <person name="Chen Y."/>
            <person name="Huang Y.H."/>
            <person name="Tao Y.W."/>
            <person name="Wang J."/>
            <person name="Li Y."/>
            <person name="Peng Y."/>
            <person name="Dong T."/>
            <person name="Lai X.M."/>
            <person name="Lin Y.C."/>
        </authorList>
    </citation>
    <scope>BIOTECHNOLOGY</scope>
</reference>
<reference key="5">
    <citation type="journal article" date="2011" name="Toxicon">
        <title>Phytotoxicity of fusaric acid and analogs to cotton.</title>
        <authorList>
            <person name="Stipanovic R.D."/>
            <person name="Puckhaber L.S."/>
            <person name="Liu J."/>
            <person name="Bell A.A."/>
        </authorList>
    </citation>
    <scope>BIOTECHNOLOGY</scope>
</reference>
<reference key="6">
    <citation type="journal article" date="2012" name="Planta Med.">
        <title>In vitro acanthamoebicidal activity of fusaric acid and dehydrofusaric acid from an endophytic fungus Fusarium sp. Tlau3.</title>
        <authorList>
            <person name="Boonman N."/>
            <person name="Prachya S."/>
            <person name="Boonmee A."/>
            <person name="Kittakoop P."/>
            <person name="Wiyakrutta S."/>
            <person name="Sriubolmas N."/>
            <person name="Warit S."/>
            <person name="Dharmkrong-At Chusattayanond A."/>
        </authorList>
    </citation>
    <scope>BIOTECHNOLOGY</scope>
</reference>
<reference key="7">
    <citation type="journal article" date="2013" name="Planta">
        <title>Fusaric acid induction of programmed cell death modulated through nitric oxide signalling in tobacco suspension cells.</title>
        <authorList>
            <person name="Jiao J."/>
            <person name="Zhou B."/>
            <person name="Zhu X."/>
            <person name="Gao Z."/>
            <person name="Liang Y."/>
        </authorList>
    </citation>
    <scope>BIOTECHNOLOGY</scope>
</reference>
<reference key="8">
    <citation type="journal article" date="2013" name="PLoS ONE">
        <title>Contamination of bananas with beauvericin and fusaric acid produced by Fusarium oxysporum f. sp. cubense.</title>
        <authorList>
            <person name="Li C."/>
            <person name="Zuo C."/>
            <person name="Deng G."/>
            <person name="Kuang R."/>
            <person name="Yang Q."/>
            <person name="Hu C."/>
            <person name="Sheng O."/>
            <person name="Zhang S."/>
            <person name="Ma L."/>
            <person name="Wei Y."/>
            <person name="Yang J."/>
            <person name="Liu S."/>
            <person name="Biswas M.K."/>
            <person name="Viljoen A."/>
            <person name="Yi G."/>
        </authorList>
    </citation>
    <scope>BIOTECHNOLOGY</scope>
</reference>
<reference key="9">
    <citation type="journal article" date="2016" name="Environ. Microbiol.">
        <title>Two separate key enzymes and two pathway-specific transcription factors are involved in fusaric acid biosynthesis in Fusarium fujikuroi.</title>
        <authorList>
            <person name="Studt L."/>
            <person name="Janevska S."/>
            <person name="Niehaus E.M."/>
            <person name="Burkhardt I."/>
            <person name="Arndt B."/>
            <person name="Sieber C.M."/>
            <person name="Humpf H.U."/>
            <person name="Dickschat J.S."/>
            <person name="Tudzynski B."/>
        </authorList>
    </citation>
    <scope>FUNCTION</scope>
    <scope>INDUCTION</scope>
</reference>
<organism>
    <name type="scientific">Gibberella fujikuroi (strain CBS 195.34 / IMI 58289 / NRRL A-6831)</name>
    <name type="common">Bakanae and foot rot disease fungus</name>
    <name type="synonym">Fusarium fujikuroi</name>
    <dbReference type="NCBI Taxonomy" id="1279085"/>
    <lineage>
        <taxon>Eukaryota</taxon>
        <taxon>Fungi</taxon>
        <taxon>Dikarya</taxon>
        <taxon>Ascomycota</taxon>
        <taxon>Pezizomycotina</taxon>
        <taxon>Sordariomycetes</taxon>
        <taxon>Hypocreomycetidae</taxon>
        <taxon>Hypocreales</taxon>
        <taxon>Nectriaceae</taxon>
        <taxon>Fusarium</taxon>
        <taxon>Fusarium fujikuroi species complex</taxon>
    </lineage>
</organism>
<comment type="function">
    <text evidence="10">Transcription factor that is involved in the formation of the two Fusaric acid derivatives, dehydrofusaric acid and fusarinolic acid, serving as a detoxification mechanism (PubMed:26662839).</text>
</comment>
<comment type="subcellular location">
    <subcellularLocation>
        <location evidence="1">Nucleus</location>
    </subcellularLocation>
</comment>
<comment type="induction">
    <text evidence="10">Expression is up-regulated upon exogenous application of fusaric acid (PubMed:26662839).</text>
</comment>
<comment type="biotechnology">
    <text evidence="3 4 5 6 7 8 9">Fusaric acid is phytotoxic to plants such as cotton and banana (PubMed:20955724, PubMed:23922960). It has been shown to induce programmed cell death in plants (PubMed:16868776, PubMed:23838885). In addition to a mild toxicity to animals, fusaric acid exhibits acanthamoebicidal, antioomycete, and antimycobacterial activities (PubMed:17927749, PubMed:21811925, PubMed:22864988).</text>
</comment>
<protein>
    <recommendedName>
        <fullName evidence="11">Fusaric acid cluster transcription factor FUB12</fullName>
    </recommendedName>
    <alternativeName>
        <fullName evidence="11">Fusaric acid biosynthesis protein 12</fullName>
    </alternativeName>
</protein>
<proteinExistence type="evidence at protein level"/>
<keyword id="KW-0238">DNA-binding</keyword>
<keyword id="KW-0479">Metal-binding</keyword>
<keyword id="KW-0539">Nucleus</keyword>
<keyword id="KW-1185">Reference proteome</keyword>
<keyword id="KW-0804">Transcription</keyword>
<keyword id="KW-0805">Transcription regulation</keyword>
<keyword id="KW-0862">Zinc</keyword>
<gene>
    <name evidence="11" type="primary">FUB12</name>
    <name type="ORF">FFUJ_02119</name>
</gene>
<dbReference type="EMBL" id="HF679025">
    <property type="protein sequence ID" value="CCT65196.1"/>
    <property type="molecule type" value="Genomic_DNA"/>
</dbReference>
<dbReference type="STRING" id="1279085.S0DRX3"/>
<dbReference type="EnsemblFungi" id="CCT65196">
    <property type="protein sequence ID" value="CCT65196"/>
    <property type="gene ID" value="FFUJ_02119"/>
</dbReference>
<dbReference type="VEuPathDB" id="FungiDB:FFUJ_02119"/>
<dbReference type="HOGENOM" id="CLU_023926_1_0_1"/>
<dbReference type="Proteomes" id="UP000016800">
    <property type="component" value="Chromosome 3"/>
</dbReference>
<dbReference type="GO" id="GO:0005634">
    <property type="term" value="C:nucleus"/>
    <property type="evidence" value="ECO:0007669"/>
    <property type="project" value="UniProtKB-SubCell"/>
</dbReference>
<dbReference type="GO" id="GO:0003677">
    <property type="term" value="F:DNA binding"/>
    <property type="evidence" value="ECO:0007669"/>
    <property type="project" value="UniProtKB-KW"/>
</dbReference>
<dbReference type="GO" id="GO:0000981">
    <property type="term" value="F:DNA-binding transcription factor activity, RNA polymerase II-specific"/>
    <property type="evidence" value="ECO:0007669"/>
    <property type="project" value="InterPro"/>
</dbReference>
<dbReference type="GO" id="GO:0008270">
    <property type="term" value="F:zinc ion binding"/>
    <property type="evidence" value="ECO:0007669"/>
    <property type="project" value="InterPro"/>
</dbReference>
<dbReference type="GO" id="GO:0006351">
    <property type="term" value="P:DNA-templated transcription"/>
    <property type="evidence" value="ECO:0007669"/>
    <property type="project" value="InterPro"/>
</dbReference>
<dbReference type="CDD" id="cd12148">
    <property type="entry name" value="fungal_TF_MHR"/>
    <property type="match status" value="1"/>
</dbReference>
<dbReference type="CDD" id="cd00067">
    <property type="entry name" value="GAL4"/>
    <property type="match status" value="1"/>
</dbReference>
<dbReference type="Gene3D" id="4.10.240.10">
    <property type="entry name" value="Zn(2)-C6 fungal-type DNA-binding domain"/>
    <property type="match status" value="1"/>
</dbReference>
<dbReference type="InterPro" id="IPR052073">
    <property type="entry name" value="Amide_Lactam_Regulators"/>
</dbReference>
<dbReference type="InterPro" id="IPR007219">
    <property type="entry name" value="Transcription_factor_dom_fun"/>
</dbReference>
<dbReference type="InterPro" id="IPR036864">
    <property type="entry name" value="Zn2-C6_fun-type_DNA-bd_sf"/>
</dbReference>
<dbReference type="InterPro" id="IPR001138">
    <property type="entry name" value="Zn2Cys6_DnaBD"/>
</dbReference>
<dbReference type="PANTHER" id="PTHR47171">
    <property type="entry name" value="FARA-RELATED"/>
    <property type="match status" value="1"/>
</dbReference>
<dbReference type="PANTHER" id="PTHR47171:SF3">
    <property type="entry name" value="FARA-RELATED"/>
    <property type="match status" value="1"/>
</dbReference>
<dbReference type="Pfam" id="PF04082">
    <property type="entry name" value="Fungal_trans"/>
    <property type="match status" value="1"/>
</dbReference>
<dbReference type="Pfam" id="PF00172">
    <property type="entry name" value="Zn_clus"/>
    <property type="match status" value="1"/>
</dbReference>
<dbReference type="SMART" id="SM00066">
    <property type="entry name" value="GAL4"/>
    <property type="match status" value="1"/>
</dbReference>
<dbReference type="SUPFAM" id="SSF57701">
    <property type="entry name" value="Zn2/Cys6 DNA-binding domain"/>
    <property type="match status" value="1"/>
</dbReference>
<dbReference type="PROSITE" id="PS00463">
    <property type="entry name" value="ZN2_CY6_FUNGAL_1"/>
    <property type="match status" value="1"/>
</dbReference>
<dbReference type="PROSITE" id="PS50048">
    <property type="entry name" value="ZN2_CY6_FUNGAL_2"/>
    <property type="match status" value="1"/>
</dbReference>
<accession>S0DRX3</accession>
<sequence>MPLPSRASSTPKISKACVPCRTRKIKCNAAVVGLPCGSCVSRECPDECVLSARKRRTVKGRNAEVPRSRKNIPDTNGSILSPRQQQLPTNVSRQTTDSSHSDPVEESIHASHTGSSLRNDTPHSRDRRPPGQAQADLLYLNILQDTVNDTSAAQTDASDHQSNDEPDDSFNSQIHHWNPPPQLDDVDNEYLAKKKVFELPPPRFMDDIVKAYFDYVHPFAPILNRIDFIQSYRSGSCCIFLLHAVAAAASLYVTHDVLIGCGYPDRSTAQASFFSKAKLFHDFHCQGDPLSMLQGSMILGAIILDHPSDRDFQYWFHNSVRRASKMGVQNACLRDDGSQKLYRRIWWVLHNRDIFHFFINTQNMRLLANAPPIRPLTEADWETEDIEQWSGILSPISQAQKVSLIAQCELAQIFGNVMSVVTSSNPSAEEIHKRILPLDAWRTSLPERMHLMASFAEGEIYHLEALTTSYRFECIMCRLLRRGRWQMSDGGLREWAQQRFRSAIFELDTIVKRVMINNMIQKLPTTFITTITALLALHIESALDAAESSLIRSMARISVQHTMLALDQIRDTPAIKRALPAFEIVLSKNKLYPMSTSDTEQINTMQTMSQDQALSDGHILQPPQTDMTLPQDDQSFLYGDFIGFDFLDRWQMEQLDFTGIY</sequence>